<evidence type="ECO:0000250" key="1">
    <source>
        <dbReference type="UniProtKB" id="O95167"/>
    </source>
</evidence>
<evidence type="ECO:0000255" key="2"/>
<evidence type="ECO:0000256" key="3">
    <source>
        <dbReference type="SAM" id="MobiDB-lite"/>
    </source>
</evidence>
<evidence type="ECO:0000269" key="4">
    <source>
    </source>
</evidence>
<evidence type="ECO:0000269" key="5">
    <source>
    </source>
</evidence>
<evidence type="ECO:0000269" key="6">
    <source>
    </source>
</evidence>
<evidence type="ECO:0000305" key="7"/>
<evidence type="ECO:0000305" key="8">
    <source>
    </source>
</evidence>
<evidence type="ECO:0007829" key="9">
    <source>
        <dbReference type="PDB" id="7QSM"/>
    </source>
</evidence>
<evidence type="ECO:0007829" key="10">
    <source>
        <dbReference type="PDB" id="7QSO"/>
    </source>
</evidence>
<reference key="1">
    <citation type="journal article" date="1992" name="J. Mol. Biol.">
        <title>Sequences of 20 subunits of NADH:ubiquinone oxidoreductase from bovine heart mitochondria. Application of a novel strategy for sequencing proteins using the polymerase chain reaction.</title>
        <authorList>
            <person name="Walker J.E."/>
            <person name="Arizmendi J.M."/>
            <person name="Dupuis A."/>
            <person name="Fearnley I.M."/>
            <person name="Finel M."/>
            <person name="Medd S.M."/>
            <person name="Pilkington S.J."/>
            <person name="Runswick M.J."/>
            <person name="Skehel J.M."/>
        </authorList>
    </citation>
    <scope>NUCLEOTIDE SEQUENCE [MRNA]</scope>
    <scope>PROTEIN SEQUENCE OF 44-74</scope>
    <source>
        <tissue>Heart</tissue>
    </source>
</reference>
<reference key="2">
    <citation type="submission" date="2005-08" db="EMBL/GenBank/DDBJ databases">
        <authorList>
            <consortium name="NIH - Mammalian Gene Collection (MGC) project"/>
        </authorList>
    </citation>
    <scope>NUCLEOTIDE SEQUENCE [LARGE SCALE MRNA]</scope>
    <source>
        <strain>Crossbred X Angus</strain>
        <tissue>Liver</tissue>
    </source>
</reference>
<reference key="3">
    <citation type="journal article" date="1994" name="Biochem. Soc. Trans.">
        <title>Electrospray ionization mass spectrometric analysis of subunits of NADH:ubiquinone oxidoreductase (complex I) from bovine heart mitochondria.</title>
        <authorList>
            <person name="Fearnley I.M."/>
            <person name="Skehel J.M."/>
            <person name="Walker J.E."/>
        </authorList>
    </citation>
    <scope>ACETYLATION AT ALA-2</scope>
</reference>
<reference key="4">
    <citation type="journal article" date="2008" name="Anal. Biochem.">
        <title>Subunit analysis of bovine heart complex I by reversed-phase high-performance liquid chromatography, electrospray ionization-tandem mass spectrometry, and matrix-assisted laser desorption/ionization-time-of-flight mass spectrometry.</title>
        <authorList>
            <person name="Lemma-Gray P."/>
            <person name="Valusova E."/>
            <person name="Carroll C.A."/>
            <person name="Weintraub S.T."/>
            <person name="Musatov A."/>
            <person name="Robinson N.C."/>
        </authorList>
    </citation>
    <scope>SUBUNIT</scope>
    <scope>IDENTIFICATION IN COMPLEX I</scope>
    <scope>SUBCELLULAR LOCATION</scope>
</reference>
<comment type="function">
    <text evidence="1">Accessory subunit of the mitochondrial membrane respiratory chain NADH dehydrogenase (Complex I), that is believed not to be involved in catalysis. Complex I functions in the transfer of electrons from NADH to the respiratory chain. The immediate electron acceptor for the enzyme is believed to be ubiquinone.</text>
</comment>
<comment type="subunit">
    <text evidence="4 5">Complex I is composed of 45 different subunits.</text>
</comment>
<comment type="subcellular location">
    <subcellularLocation>
        <location evidence="8">Mitochondrion inner membrane</location>
        <topology evidence="2">Single-pass membrane protein</topology>
    </subcellularLocation>
</comment>
<comment type="similarity">
    <text evidence="7">Belongs to the complex I NDUFA3 subunit family.</text>
</comment>
<protein>
    <recommendedName>
        <fullName>NADH dehydrogenase [ubiquinone] 1 alpha subcomplex subunit 3</fullName>
    </recommendedName>
    <alternativeName>
        <fullName>Complex I-B9</fullName>
        <shortName>CI-B9</shortName>
    </alternativeName>
    <alternativeName>
        <fullName>NADH-ubiquinone oxidoreductase B9 subunit</fullName>
    </alternativeName>
</protein>
<organism>
    <name type="scientific">Bos taurus</name>
    <name type="common">Bovine</name>
    <dbReference type="NCBI Taxonomy" id="9913"/>
    <lineage>
        <taxon>Eukaryota</taxon>
        <taxon>Metazoa</taxon>
        <taxon>Chordata</taxon>
        <taxon>Craniata</taxon>
        <taxon>Vertebrata</taxon>
        <taxon>Euteleostomi</taxon>
        <taxon>Mammalia</taxon>
        <taxon>Eutheria</taxon>
        <taxon>Laurasiatheria</taxon>
        <taxon>Artiodactyla</taxon>
        <taxon>Ruminantia</taxon>
        <taxon>Pecora</taxon>
        <taxon>Bovidae</taxon>
        <taxon>Bovinae</taxon>
        <taxon>Bos</taxon>
    </lineage>
</organism>
<name>NDUA3_BOVIN</name>
<dbReference type="EMBL" id="X63217">
    <property type="protein sequence ID" value="CAA44902.1"/>
    <property type="molecule type" value="mRNA"/>
</dbReference>
<dbReference type="EMBL" id="BC102727">
    <property type="protein sequence ID" value="AAI02728.1"/>
    <property type="molecule type" value="mRNA"/>
</dbReference>
<dbReference type="PIR" id="S28248">
    <property type="entry name" value="S28248"/>
</dbReference>
<dbReference type="RefSeq" id="NP_788832.1">
    <property type="nucleotide sequence ID" value="NM_176659.2"/>
</dbReference>
<dbReference type="PDB" id="5LC5">
    <property type="method" value="EM"/>
    <property type="resolution" value="4.35 A"/>
    <property type="chains" value="b=2-46"/>
</dbReference>
<dbReference type="PDB" id="5LDW">
    <property type="method" value="EM"/>
    <property type="resolution" value="4.27 A"/>
    <property type="chains" value="b=2-46"/>
</dbReference>
<dbReference type="PDB" id="5LDX">
    <property type="method" value="EM"/>
    <property type="resolution" value="5.60 A"/>
    <property type="chains" value="b=2-46"/>
</dbReference>
<dbReference type="PDB" id="5O31">
    <property type="method" value="EM"/>
    <property type="resolution" value="4.13 A"/>
    <property type="chains" value="b=2-46"/>
</dbReference>
<dbReference type="PDB" id="7DGQ">
    <property type="method" value="EM"/>
    <property type="resolution" value="5.00 A"/>
    <property type="chains" value="L=2-84"/>
</dbReference>
<dbReference type="PDB" id="7DGR">
    <property type="method" value="EM"/>
    <property type="resolution" value="4.60 A"/>
    <property type="chains" value="L=2-84"/>
</dbReference>
<dbReference type="PDB" id="7DGS">
    <property type="method" value="EM"/>
    <property type="resolution" value="7.80 A"/>
    <property type="chains" value="L=2-84"/>
</dbReference>
<dbReference type="PDB" id="7DGZ">
    <property type="method" value="EM"/>
    <property type="resolution" value="3.80 A"/>
    <property type="chains" value="L=2-84"/>
</dbReference>
<dbReference type="PDB" id="7DH0">
    <property type="method" value="EM"/>
    <property type="resolution" value="4.20 A"/>
    <property type="chains" value="L=2-84"/>
</dbReference>
<dbReference type="PDB" id="7DKF">
    <property type="method" value="EM"/>
    <property type="resolution" value="8.30 A"/>
    <property type="chains" value="L2=2-84"/>
</dbReference>
<dbReference type="PDB" id="7QSD">
    <property type="method" value="EM"/>
    <property type="resolution" value="3.10 A"/>
    <property type="chains" value="b=1-84"/>
</dbReference>
<dbReference type="PDB" id="7QSK">
    <property type="method" value="EM"/>
    <property type="resolution" value="2.84 A"/>
    <property type="chains" value="b=1-84"/>
</dbReference>
<dbReference type="PDB" id="7QSL">
    <property type="method" value="EM"/>
    <property type="resolution" value="2.76 A"/>
    <property type="chains" value="b=1-84"/>
</dbReference>
<dbReference type="PDB" id="7QSM">
    <property type="method" value="EM"/>
    <property type="resolution" value="2.30 A"/>
    <property type="chains" value="b=1-84"/>
</dbReference>
<dbReference type="PDB" id="7QSN">
    <property type="method" value="EM"/>
    <property type="resolution" value="2.81 A"/>
    <property type="chains" value="b=1-84"/>
</dbReference>
<dbReference type="PDB" id="7QSO">
    <property type="method" value="EM"/>
    <property type="resolution" value="3.02 A"/>
    <property type="chains" value="b=1-84"/>
</dbReference>
<dbReference type="PDB" id="7R41">
    <property type="method" value="EM"/>
    <property type="resolution" value="2.30 A"/>
    <property type="chains" value="b=1-84"/>
</dbReference>
<dbReference type="PDB" id="7R42">
    <property type="method" value="EM"/>
    <property type="resolution" value="2.30 A"/>
    <property type="chains" value="b=1-84"/>
</dbReference>
<dbReference type="PDB" id="7R43">
    <property type="method" value="EM"/>
    <property type="resolution" value="2.40 A"/>
    <property type="chains" value="b=1-84"/>
</dbReference>
<dbReference type="PDB" id="7R44">
    <property type="method" value="EM"/>
    <property type="resolution" value="2.40 A"/>
    <property type="chains" value="b=1-84"/>
</dbReference>
<dbReference type="PDB" id="7R45">
    <property type="method" value="EM"/>
    <property type="resolution" value="2.40 A"/>
    <property type="chains" value="b=1-84"/>
</dbReference>
<dbReference type="PDB" id="7R46">
    <property type="method" value="EM"/>
    <property type="resolution" value="2.40 A"/>
    <property type="chains" value="b=1-84"/>
</dbReference>
<dbReference type="PDB" id="7R47">
    <property type="method" value="EM"/>
    <property type="resolution" value="2.30 A"/>
    <property type="chains" value="b=1-84"/>
</dbReference>
<dbReference type="PDB" id="7R48">
    <property type="method" value="EM"/>
    <property type="resolution" value="2.30 A"/>
    <property type="chains" value="b=1-84"/>
</dbReference>
<dbReference type="PDB" id="7R4C">
    <property type="method" value="EM"/>
    <property type="resolution" value="2.30 A"/>
    <property type="chains" value="b=1-84"/>
</dbReference>
<dbReference type="PDB" id="7R4D">
    <property type="method" value="EM"/>
    <property type="resolution" value="2.30 A"/>
    <property type="chains" value="b=1-84"/>
</dbReference>
<dbReference type="PDB" id="7R4F">
    <property type="method" value="EM"/>
    <property type="resolution" value="2.40 A"/>
    <property type="chains" value="b=1-84"/>
</dbReference>
<dbReference type="PDB" id="7R4G">
    <property type="method" value="EM"/>
    <property type="resolution" value="2.50 A"/>
    <property type="chains" value="b=1-84"/>
</dbReference>
<dbReference type="PDB" id="8Q0A">
    <property type="method" value="EM"/>
    <property type="resolution" value="3.10 A"/>
    <property type="chains" value="b=1-84"/>
</dbReference>
<dbReference type="PDB" id="8Q0F">
    <property type="method" value="EM"/>
    <property type="resolution" value="3.10 A"/>
    <property type="chains" value="b=1-84"/>
</dbReference>
<dbReference type="PDB" id="8Q0J">
    <property type="method" value="EM"/>
    <property type="resolution" value="3.80 A"/>
    <property type="chains" value="b=1-84"/>
</dbReference>
<dbReference type="PDB" id="8Q0M">
    <property type="method" value="EM"/>
    <property type="resolution" value="3.10 A"/>
    <property type="chains" value="b=1-84"/>
</dbReference>
<dbReference type="PDB" id="8Q0O">
    <property type="method" value="EM"/>
    <property type="resolution" value="3.10 A"/>
    <property type="chains" value="b=1-84"/>
</dbReference>
<dbReference type="PDB" id="8Q0Q">
    <property type="method" value="EM"/>
    <property type="resolution" value="3.60 A"/>
    <property type="chains" value="b=1-84"/>
</dbReference>
<dbReference type="PDB" id="8Q1P">
    <property type="method" value="EM"/>
    <property type="resolution" value="2.90 A"/>
    <property type="chains" value="b=1-84"/>
</dbReference>
<dbReference type="PDB" id="8Q1U">
    <property type="method" value="EM"/>
    <property type="resolution" value="3.30 A"/>
    <property type="chains" value="b=1-84"/>
</dbReference>
<dbReference type="PDB" id="8Q1Y">
    <property type="method" value="EM"/>
    <property type="resolution" value="2.60 A"/>
    <property type="chains" value="b=1-84"/>
</dbReference>
<dbReference type="PDB" id="8Q25">
    <property type="method" value="EM"/>
    <property type="resolution" value="2.80 A"/>
    <property type="chains" value="b=1-84"/>
</dbReference>
<dbReference type="PDB" id="8Q45">
    <property type="method" value="EM"/>
    <property type="resolution" value="2.70 A"/>
    <property type="chains" value="b=1-84"/>
</dbReference>
<dbReference type="PDB" id="8Q46">
    <property type="method" value="EM"/>
    <property type="resolution" value="2.60 A"/>
    <property type="chains" value="b=1-84"/>
</dbReference>
<dbReference type="PDB" id="8Q47">
    <property type="method" value="EM"/>
    <property type="resolution" value="2.90 A"/>
    <property type="chains" value="b=1-84"/>
</dbReference>
<dbReference type="PDB" id="8Q48">
    <property type="method" value="EM"/>
    <property type="resolution" value="2.50 A"/>
    <property type="chains" value="b=1-84"/>
</dbReference>
<dbReference type="PDB" id="8Q49">
    <property type="method" value="EM"/>
    <property type="resolution" value="2.60 A"/>
    <property type="chains" value="b=1-84"/>
</dbReference>
<dbReference type="PDB" id="8Q4A">
    <property type="method" value="EM"/>
    <property type="resolution" value="2.60 A"/>
    <property type="chains" value="b=1-84"/>
</dbReference>
<dbReference type="PDBsum" id="5LC5"/>
<dbReference type="PDBsum" id="5LDW"/>
<dbReference type="PDBsum" id="5LDX"/>
<dbReference type="PDBsum" id="5O31"/>
<dbReference type="PDBsum" id="7DGQ"/>
<dbReference type="PDBsum" id="7DGR"/>
<dbReference type="PDBsum" id="7DGS"/>
<dbReference type="PDBsum" id="7DGZ"/>
<dbReference type="PDBsum" id="7DH0"/>
<dbReference type="PDBsum" id="7DKF"/>
<dbReference type="PDBsum" id="7QSD"/>
<dbReference type="PDBsum" id="7QSK"/>
<dbReference type="PDBsum" id="7QSL"/>
<dbReference type="PDBsum" id="7QSM"/>
<dbReference type="PDBsum" id="7QSN"/>
<dbReference type="PDBsum" id="7QSO"/>
<dbReference type="PDBsum" id="7R41"/>
<dbReference type="PDBsum" id="7R42"/>
<dbReference type="PDBsum" id="7R43"/>
<dbReference type="PDBsum" id="7R44"/>
<dbReference type="PDBsum" id="7R45"/>
<dbReference type="PDBsum" id="7R46"/>
<dbReference type="PDBsum" id="7R47"/>
<dbReference type="PDBsum" id="7R48"/>
<dbReference type="PDBsum" id="7R4C"/>
<dbReference type="PDBsum" id="7R4D"/>
<dbReference type="PDBsum" id="7R4F"/>
<dbReference type="PDBsum" id="7R4G"/>
<dbReference type="PDBsum" id="8Q0A"/>
<dbReference type="PDBsum" id="8Q0F"/>
<dbReference type="PDBsum" id="8Q0J"/>
<dbReference type="PDBsum" id="8Q0M"/>
<dbReference type="PDBsum" id="8Q0O"/>
<dbReference type="PDBsum" id="8Q0Q"/>
<dbReference type="PDBsum" id="8Q1P"/>
<dbReference type="PDBsum" id="8Q1U"/>
<dbReference type="PDBsum" id="8Q1Y"/>
<dbReference type="PDBsum" id="8Q25"/>
<dbReference type="PDBsum" id="8Q45"/>
<dbReference type="PDBsum" id="8Q46"/>
<dbReference type="PDBsum" id="8Q47"/>
<dbReference type="PDBsum" id="8Q48"/>
<dbReference type="PDBsum" id="8Q49"/>
<dbReference type="PDBsum" id="8Q4A"/>
<dbReference type="EMDB" id="EMD-14127"/>
<dbReference type="EMDB" id="EMD-14132"/>
<dbReference type="EMDB" id="EMD-14133"/>
<dbReference type="EMDB" id="EMD-14134"/>
<dbReference type="EMDB" id="EMD-14139"/>
<dbReference type="EMDB" id="EMD-14140"/>
<dbReference type="EMDB" id="EMD-14251"/>
<dbReference type="EMDB" id="EMD-14256"/>
<dbReference type="EMDB" id="EMD-14261"/>
<dbReference type="EMDB" id="EMD-14266"/>
<dbReference type="EMDB" id="EMD-14272"/>
<dbReference type="EMDB" id="EMD-14277"/>
<dbReference type="EMDB" id="EMD-14282"/>
<dbReference type="EMDB" id="EMD-14287"/>
<dbReference type="EMDB" id="EMD-14292"/>
<dbReference type="EMDB" id="EMD-14297"/>
<dbReference type="EMDB" id="EMD-14302"/>
<dbReference type="EMDB" id="EMD-14307"/>
<dbReference type="EMDB" id="EMD-18051"/>
<dbReference type="EMDB" id="EMD-18052"/>
<dbReference type="EMDB" id="EMD-18054"/>
<dbReference type="EMDB" id="EMD-18055"/>
<dbReference type="EMDB" id="EMD-18057"/>
<dbReference type="EMDB" id="EMD-18059"/>
<dbReference type="EMDB" id="EMD-18066"/>
<dbReference type="EMDB" id="EMD-18067"/>
<dbReference type="EMDB" id="EMD-18068"/>
<dbReference type="EMDB" id="EMD-18069"/>
<dbReference type="EMDB" id="EMD-18138"/>
<dbReference type="EMDB" id="EMD-18139"/>
<dbReference type="EMDB" id="EMD-18140"/>
<dbReference type="EMDB" id="EMD-18141"/>
<dbReference type="EMDB" id="EMD-18142"/>
<dbReference type="EMDB" id="EMD-18143"/>
<dbReference type="EMDB" id="EMD-30673"/>
<dbReference type="EMDB" id="EMD-30674"/>
<dbReference type="EMDB" id="EMD-30675"/>
<dbReference type="EMDB" id="EMD-30676"/>
<dbReference type="EMDB" id="EMD-30677"/>
<dbReference type="EMDB" id="EMD-30706"/>
<dbReference type="EMDB" id="EMD-3731"/>
<dbReference type="EMDB" id="EMD-4032"/>
<dbReference type="EMDB" id="EMD-4040"/>
<dbReference type="EMDB" id="EMD-4041"/>
<dbReference type="SMR" id="Q02371"/>
<dbReference type="CORUM" id="Q02371"/>
<dbReference type="DIP" id="DIP-38801N"/>
<dbReference type="FunCoup" id="Q02371">
    <property type="interactions" value="887"/>
</dbReference>
<dbReference type="IntAct" id="Q02371">
    <property type="interactions" value="3"/>
</dbReference>
<dbReference type="STRING" id="9913.ENSBTAP00000010193"/>
<dbReference type="TCDB" id="3.D.1.6.1">
    <property type="family name" value="the h+ or na+-translocating nadh dehydrogenase (ndh) family"/>
</dbReference>
<dbReference type="iPTMnet" id="Q02371"/>
<dbReference type="PaxDb" id="9913-ENSBTAP00000010193"/>
<dbReference type="GeneID" id="338064"/>
<dbReference type="KEGG" id="bta:338064"/>
<dbReference type="CTD" id="4696"/>
<dbReference type="VEuPathDB" id="HostDB:ENSBTAG00000007754"/>
<dbReference type="eggNOG" id="ENOG502S4RS">
    <property type="taxonomic scope" value="Eukaryota"/>
</dbReference>
<dbReference type="HOGENOM" id="CLU_171491_0_0_1"/>
<dbReference type="InParanoid" id="Q02371"/>
<dbReference type="OMA" id="MINQAVP"/>
<dbReference type="OrthoDB" id="199366at2759"/>
<dbReference type="TreeFam" id="TF333021"/>
<dbReference type="Reactome" id="R-BTA-611105">
    <property type="pathway name" value="Respiratory electron transport"/>
</dbReference>
<dbReference type="Reactome" id="R-BTA-6799198">
    <property type="pathway name" value="Complex I biogenesis"/>
</dbReference>
<dbReference type="Proteomes" id="UP000009136">
    <property type="component" value="Chromosome 18"/>
</dbReference>
<dbReference type="Bgee" id="ENSBTAG00000007754">
    <property type="expression patterns" value="Expressed in laryngeal cartilage and 105 other cell types or tissues"/>
</dbReference>
<dbReference type="GO" id="GO:0005743">
    <property type="term" value="C:mitochondrial inner membrane"/>
    <property type="evidence" value="ECO:0007669"/>
    <property type="project" value="UniProtKB-SubCell"/>
</dbReference>
<dbReference type="GO" id="GO:0005739">
    <property type="term" value="C:mitochondrion"/>
    <property type="evidence" value="ECO:0000305"/>
    <property type="project" value="UniProtKB"/>
</dbReference>
<dbReference type="GO" id="GO:0045271">
    <property type="term" value="C:respiratory chain complex I"/>
    <property type="evidence" value="ECO:0000314"/>
    <property type="project" value="UniProtKB"/>
</dbReference>
<dbReference type="CDD" id="cd22902">
    <property type="entry name" value="NDUFA3"/>
    <property type="match status" value="1"/>
</dbReference>
<dbReference type="InterPro" id="IPR026626">
    <property type="entry name" value="NDUFA3"/>
</dbReference>
<dbReference type="PANTHER" id="PTHR15221">
    <property type="entry name" value="NADH DEHYDROGENASE [UBIQUINONE] 1 ALPHA SUBCOMPLEX SUBUNIT 3"/>
    <property type="match status" value="1"/>
</dbReference>
<dbReference type="PANTHER" id="PTHR15221:SF0">
    <property type="entry name" value="NADH DEHYDROGENASE [UBIQUINONE] 1 ALPHA SUBCOMPLEX SUBUNIT 3"/>
    <property type="match status" value="1"/>
</dbReference>
<dbReference type="Pfam" id="PF14987">
    <property type="entry name" value="NADHdh_A3"/>
    <property type="match status" value="1"/>
</dbReference>
<feature type="initiator methionine" description="Removed" evidence="6">
    <location>
        <position position="1"/>
    </location>
</feature>
<feature type="chain" id="PRO_0000118792" description="NADH dehydrogenase [ubiquinone] 1 alpha subcomplex subunit 3">
    <location>
        <begin position="2"/>
        <end position="84"/>
    </location>
</feature>
<feature type="transmembrane region" description="Helical" evidence="2">
    <location>
        <begin position="18"/>
        <end position="38"/>
    </location>
</feature>
<feature type="region of interest" description="Disordered" evidence="3">
    <location>
        <begin position="56"/>
        <end position="84"/>
    </location>
</feature>
<feature type="modified residue" description="N-acetylalanine" evidence="6">
    <location>
        <position position="2"/>
    </location>
</feature>
<feature type="helix" evidence="9">
    <location>
        <begin position="4"/>
        <end position="15"/>
    </location>
</feature>
<feature type="helix" evidence="9">
    <location>
        <begin position="17"/>
        <end position="35"/>
    </location>
</feature>
<feature type="helix" evidence="9">
    <location>
        <begin position="39"/>
        <end position="48"/>
    </location>
</feature>
<feature type="strand" evidence="10">
    <location>
        <begin position="72"/>
        <end position="75"/>
    </location>
</feature>
<feature type="helix" evidence="9">
    <location>
        <begin position="79"/>
        <end position="83"/>
    </location>
</feature>
<proteinExistence type="evidence at protein level"/>
<gene>
    <name type="primary">NDUFA3</name>
</gene>
<keyword id="KW-0002">3D-structure</keyword>
<keyword id="KW-0007">Acetylation</keyword>
<keyword id="KW-0903">Direct protein sequencing</keyword>
<keyword id="KW-0249">Electron transport</keyword>
<keyword id="KW-0472">Membrane</keyword>
<keyword id="KW-0496">Mitochondrion</keyword>
<keyword id="KW-0999">Mitochondrion inner membrane</keyword>
<keyword id="KW-1185">Reference proteome</keyword>
<keyword id="KW-0679">Respiratory chain</keyword>
<keyword id="KW-0812">Transmembrane</keyword>
<keyword id="KW-1133">Transmembrane helix</keyword>
<keyword id="KW-0813">Transport</keyword>
<accession>Q02371</accession>
<accession>Q3SZS6</accession>
<sequence>MAERVAAFLKNVWAKEPVLVASFAIAGLAVILPTLSPYTKYSLMINRATPYNYPVPLRDDGNMPDVPSHPQDPQGPSLEWLKRL</sequence>